<protein>
    <recommendedName>
        <fullName evidence="1">Threonine--tRNA ligase</fullName>
        <ecNumber evidence="1">6.1.1.3</ecNumber>
    </recommendedName>
    <alternativeName>
        <fullName evidence="1">Threonyl-tRNA synthetase</fullName>
        <shortName evidence="1">ThrRS</shortName>
    </alternativeName>
</protein>
<reference key="1">
    <citation type="submission" date="2007-05" db="EMBL/GenBank/DDBJ databases">
        <title>Complete sequence of chromosome of Psychrobacter sp. PRwf-1.</title>
        <authorList>
            <consortium name="US DOE Joint Genome Institute"/>
            <person name="Copeland A."/>
            <person name="Lucas S."/>
            <person name="Lapidus A."/>
            <person name="Barry K."/>
            <person name="Detter J.C."/>
            <person name="Glavina del Rio T."/>
            <person name="Hammon N."/>
            <person name="Israni S."/>
            <person name="Dalin E."/>
            <person name="Tice H."/>
            <person name="Pitluck S."/>
            <person name="Chain P."/>
            <person name="Malfatti S."/>
            <person name="Shin M."/>
            <person name="Vergez L."/>
            <person name="Schmutz J."/>
            <person name="Larimer F."/>
            <person name="Land M."/>
            <person name="Hauser L."/>
            <person name="Kyrpides N."/>
            <person name="Kim E."/>
            <person name="Tiedje J."/>
            <person name="Richardson P."/>
        </authorList>
    </citation>
    <scope>NUCLEOTIDE SEQUENCE [LARGE SCALE GENOMIC DNA]</scope>
    <source>
        <strain>PRwf-1</strain>
    </source>
</reference>
<feature type="chain" id="PRO_1000071678" description="Threonine--tRNA ligase">
    <location>
        <begin position="1"/>
        <end position="644"/>
    </location>
</feature>
<feature type="domain" description="TGS" evidence="2">
    <location>
        <begin position="1"/>
        <end position="61"/>
    </location>
</feature>
<feature type="region of interest" description="Catalytic" evidence="1">
    <location>
        <begin position="242"/>
        <end position="533"/>
    </location>
</feature>
<feature type="binding site" evidence="1">
    <location>
        <position position="333"/>
    </location>
    <ligand>
        <name>Zn(2+)</name>
        <dbReference type="ChEBI" id="CHEBI:29105"/>
    </ligand>
</feature>
<feature type="binding site" evidence="1">
    <location>
        <position position="384"/>
    </location>
    <ligand>
        <name>Zn(2+)</name>
        <dbReference type="ChEBI" id="CHEBI:29105"/>
    </ligand>
</feature>
<feature type="binding site" evidence="1">
    <location>
        <position position="510"/>
    </location>
    <ligand>
        <name>Zn(2+)</name>
        <dbReference type="ChEBI" id="CHEBI:29105"/>
    </ligand>
</feature>
<accession>A5WHD5</accession>
<keyword id="KW-0030">Aminoacyl-tRNA synthetase</keyword>
<keyword id="KW-0067">ATP-binding</keyword>
<keyword id="KW-0963">Cytoplasm</keyword>
<keyword id="KW-0436">Ligase</keyword>
<keyword id="KW-0479">Metal-binding</keyword>
<keyword id="KW-0547">Nucleotide-binding</keyword>
<keyword id="KW-0648">Protein biosynthesis</keyword>
<keyword id="KW-0694">RNA-binding</keyword>
<keyword id="KW-0820">tRNA-binding</keyword>
<keyword id="KW-0862">Zinc</keyword>
<gene>
    <name evidence="1" type="primary">thrS</name>
    <name type="ordered locus">PsycPRwf_2136</name>
</gene>
<evidence type="ECO:0000255" key="1">
    <source>
        <dbReference type="HAMAP-Rule" id="MF_00184"/>
    </source>
</evidence>
<evidence type="ECO:0000255" key="2">
    <source>
        <dbReference type="PROSITE-ProRule" id="PRU01228"/>
    </source>
</evidence>
<organism>
    <name type="scientific">Psychrobacter sp. (strain PRwf-1)</name>
    <dbReference type="NCBI Taxonomy" id="349106"/>
    <lineage>
        <taxon>Bacteria</taxon>
        <taxon>Pseudomonadati</taxon>
        <taxon>Pseudomonadota</taxon>
        <taxon>Gammaproteobacteria</taxon>
        <taxon>Moraxellales</taxon>
        <taxon>Moraxellaceae</taxon>
        <taxon>Psychrobacter</taxon>
    </lineage>
</organism>
<name>SYT_PSYWF</name>
<comment type="function">
    <text evidence="1">Catalyzes the attachment of threonine to tRNA(Thr) in a two-step reaction: L-threonine is first activated by ATP to form Thr-AMP and then transferred to the acceptor end of tRNA(Thr). Also edits incorrectly charged L-seryl-tRNA(Thr).</text>
</comment>
<comment type="catalytic activity">
    <reaction evidence="1">
        <text>tRNA(Thr) + L-threonine + ATP = L-threonyl-tRNA(Thr) + AMP + diphosphate + H(+)</text>
        <dbReference type="Rhea" id="RHEA:24624"/>
        <dbReference type="Rhea" id="RHEA-COMP:9670"/>
        <dbReference type="Rhea" id="RHEA-COMP:9704"/>
        <dbReference type="ChEBI" id="CHEBI:15378"/>
        <dbReference type="ChEBI" id="CHEBI:30616"/>
        <dbReference type="ChEBI" id="CHEBI:33019"/>
        <dbReference type="ChEBI" id="CHEBI:57926"/>
        <dbReference type="ChEBI" id="CHEBI:78442"/>
        <dbReference type="ChEBI" id="CHEBI:78534"/>
        <dbReference type="ChEBI" id="CHEBI:456215"/>
        <dbReference type="EC" id="6.1.1.3"/>
    </reaction>
</comment>
<comment type="cofactor">
    <cofactor evidence="1">
        <name>Zn(2+)</name>
        <dbReference type="ChEBI" id="CHEBI:29105"/>
    </cofactor>
    <text evidence="1">Binds 1 zinc ion per subunit.</text>
</comment>
<comment type="subunit">
    <text evidence="1">Homodimer.</text>
</comment>
<comment type="subcellular location">
    <subcellularLocation>
        <location evidence="1">Cytoplasm</location>
    </subcellularLocation>
</comment>
<comment type="similarity">
    <text evidence="1">Belongs to the class-II aminoacyl-tRNA synthetase family.</text>
</comment>
<sequence>MVAITLPDGNVKEFDGATTVMEVAQSIGPGLAKATIAGRVDGKLVDASDPITQDASVEIVTAKDKDGVDIIRHSTAHLLGHAVKQLYPNVKMVIGPVIEDGFYYDIFSEKPFTPEDMAAIEKRMAELIKQNYDVIKKMTPREEAIKIFEERGEDYKLKLIADMPEEKELGLYHHQEYVDMCRGPHVPNTRFLKVFKLMKMSGAYWRGDAKNEQLQRIYGTAWADKKDLQAYIQRIEEAEKRDHRKIGKALNLFHMQEQSPGMVFWHPNGWTIYQVLEQYMRKVQKDNGYQEIKTPQIVDRSLWEKSGHWGNYATNMFTTSSESRDYAVKPMNCPCHVQVFNQGLKSYRELPIRLAEFGSCHRNEPSGSLHGLMRVRGFTQDDAHIFCTQAQIQEEVANFIKLTLDVYKDFGFDQIEMKLSTRPEKRVGTDESWDIAEKALADALDSSGLEWEYLPGEGAFYGPKIEFSLKDSLGRVWQCGTIQVDPNMPERLEAEFVNENNERETPIMLHRAILGSFERFLGMLIEHYAGWMPVWLAPQQVVVMNITDKQADACQNVASELQNAGLRAITDLRNEKIGFKIRERTLERIPYMLVLGDKEVESGQVNVRTREGENLGVMSVADFIELVQKAVAQKGRLTTKTDEE</sequence>
<dbReference type="EC" id="6.1.1.3" evidence="1"/>
<dbReference type="EMBL" id="CP000713">
    <property type="protein sequence ID" value="ABQ95076.1"/>
    <property type="molecule type" value="Genomic_DNA"/>
</dbReference>
<dbReference type="SMR" id="A5WHD5"/>
<dbReference type="STRING" id="349106.PsycPRwf_2136"/>
<dbReference type="KEGG" id="prw:PsycPRwf_2136"/>
<dbReference type="eggNOG" id="COG0441">
    <property type="taxonomic scope" value="Bacteria"/>
</dbReference>
<dbReference type="HOGENOM" id="CLU_008554_0_1_6"/>
<dbReference type="GO" id="GO:0005829">
    <property type="term" value="C:cytosol"/>
    <property type="evidence" value="ECO:0007669"/>
    <property type="project" value="TreeGrafter"/>
</dbReference>
<dbReference type="GO" id="GO:0005524">
    <property type="term" value="F:ATP binding"/>
    <property type="evidence" value="ECO:0007669"/>
    <property type="project" value="UniProtKB-UniRule"/>
</dbReference>
<dbReference type="GO" id="GO:0046872">
    <property type="term" value="F:metal ion binding"/>
    <property type="evidence" value="ECO:0007669"/>
    <property type="project" value="UniProtKB-KW"/>
</dbReference>
<dbReference type="GO" id="GO:0004829">
    <property type="term" value="F:threonine-tRNA ligase activity"/>
    <property type="evidence" value="ECO:0007669"/>
    <property type="project" value="UniProtKB-UniRule"/>
</dbReference>
<dbReference type="GO" id="GO:0000049">
    <property type="term" value="F:tRNA binding"/>
    <property type="evidence" value="ECO:0007669"/>
    <property type="project" value="UniProtKB-KW"/>
</dbReference>
<dbReference type="GO" id="GO:0006435">
    <property type="term" value="P:threonyl-tRNA aminoacylation"/>
    <property type="evidence" value="ECO:0007669"/>
    <property type="project" value="UniProtKB-UniRule"/>
</dbReference>
<dbReference type="CDD" id="cd01667">
    <property type="entry name" value="TGS_ThrRS"/>
    <property type="match status" value="1"/>
</dbReference>
<dbReference type="CDD" id="cd00860">
    <property type="entry name" value="ThrRS_anticodon"/>
    <property type="match status" value="1"/>
</dbReference>
<dbReference type="CDD" id="cd00771">
    <property type="entry name" value="ThrRS_core"/>
    <property type="match status" value="1"/>
</dbReference>
<dbReference type="FunFam" id="3.10.20.30:FF:000005">
    <property type="entry name" value="Threonine--tRNA ligase"/>
    <property type="match status" value="1"/>
</dbReference>
<dbReference type="FunFam" id="3.30.54.20:FF:000002">
    <property type="entry name" value="Threonine--tRNA ligase"/>
    <property type="match status" value="1"/>
</dbReference>
<dbReference type="FunFam" id="3.30.930.10:FF:000002">
    <property type="entry name" value="Threonine--tRNA ligase"/>
    <property type="match status" value="1"/>
</dbReference>
<dbReference type="FunFam" id="3.40.50.800:FF:000001">
    <property type="entry name" value="Threonine--tRNA ligase"/>
    <property type="match status" value="1"/>
</dbReference>
<dbReference type="FunFam" id="3.30.980.10:FF:000005">
    <property type="entry name" value="Threonyl-tRNA synthetase, mitochondrial"/>
    <property type="match status" value="1"/>
</dbReference>
<dbReference type="Gene3D" id="3.10.20.30">
    <property type="match status" value="1"/>
</dbReference>
<dbReference type="Gene3D" id="3.30.54.20">
    <property type="match status" value="1"/>
</dbReference>
<dbReference type="Gene3D" id="3.40.50.800">
    <property type="entry name" value="Anticodon-binding domain"/>
    <property type="match status" value="1"/>
</dbReference>
<dbReference type="Gene3D" id="3.30.930.10">
    <property type="entry name" value="Bira Bifunctional Protein, Domain 2"/>
    <property type="match status" value="1"/>
</dbReference>
<dbReference type="Gene3D" id="3.30.980.10">
    <property type="entry name" value="Threonyl-trna Synthetase, Chain A, domain 2"/>
    <property type="match status" value="1"/>
</dbReference>
<dbReference type="HAMAP" id="MF_00184">
    <property type="entry name" value="Thr_tRNA_synth"/>
    <property type="match status" value="1"/>
</dbReference>
<dbReference type="InterPro" id="IPR002314">
    <property type="entry name" value="aa-tRNA-synt_IIb"/>
</dbReference>
<dbReference type="InterPro" id="IPR006195">
    <property type="entry name" value="aa-tRNA-synth_II"/>
</dbReference>
<dbReference type="InterPro" id="IPR045864">
    <property type="entry name" value="aa-tRNA-synth_II/BPL/LPL"/>
</dbReference>
<dbReference type="InterPro" id="IPR004154">
    <property type="entry name" value="Anticodon-bd"/>
</dbReference>
<dbReference type="InterPro" id="IPR036621">
    <property type="entry name" value="Anticodon-bd_dom_sf"/>
</dbReference>
<dbReference type="InterPro" id="IPR012675">
    <property type="entry name" value="Beta-grasp_dom_sf"/>
</dbReference>
<dbReference type="InterPro" id="IPR004095">
    <property type="entry name" value="TGS"/>
</dbReference>
<dbReference type="InterPro" id="IPR012676">
    <property type="entry name" value="TGS-like"/>
</dbReference>
<dbReference type="InterPro" id="IPR002320">
    <property type="entry name" value="Thr-tRNA-ligase_IIa"/>
</dbReference>
<dbReference type="InterPro" id="IPR018163">
    <property type="entry name" value="Thr/Ala-tRNA-synth_IIc_edit"/>
</dbReference>
<dbReference type="InterPro" id="IPR047246">
    <property type="entry name" value="ThrRS_anticodon"/>
</dbReference>
<dbReference type="InterPro" id="IPR033728">
    <property type="entry name" value="ThrRS_core"/>
</dbReference>
<dbReference type="InterPro" id="IPR012947">
    <property type="entry name" value="tRNA_SAD"/>
</dbReference>
<dbReference type="NCBIfam" id="TIGR00418">
    <property type="entry name" value="thrS"/>
    <property type="match status" value="1"/>
</dbReference>
<dbReference type="PANTHER" id="PTHR11451:SF44">
    <property type="entry name" value="THREONINE--TRNA LIGASE, CHLOROPLASTIC_MITOCHONDRIAL 2"/>
    <property type="match status" value="1"/>
</dbReference>
<dbReference type="PANTHER" id="PTHR11451">
    <property type="entry name" value="THREONINE-TRNA LIGASE"/>
    <property type="match status" value="1"/>
</dbReference>
<dbReference type="Pfam" id="PF03129">
    <property type="entry name" value="HGTP_anticodon"/>
    <property type="match status" value="1"/>
</dbReference>
<dbReference type="Pfam" id="PF02824">
    <property type="entry name" value="TGS"/>
    <property type="match status" value="1"/>
</dbReference>
<dbReference type="Pfam" id="PF00587">
    <property type="entry name" value="tRNA-synt_2b"/>
    <property type="match status" value="1"/>
</dbReference>
<dbReference type="Pfam" id="PF07973">
    <property type="entry name" value="tRNA_SAD"/>
    <property type="match status" value="1"/>
</dbReference>
<dbReference type="PRINTS" id="PR01047">
    <property type="entry name" value="TRNASYNTHTHR"/>
</dbReference>
<dbReference type="SMART" id="SM00863">
    <property type="entry name" value="tRNA_SAD"/>
    <property type="match status" value="1"/>
</dbReference>
<dbReference type="SUPFAM" id="SSF52954">
    <property type="entry name" value="Class II aaRS ABD-related"/>
    <property type="match status" value="1"/>
</dbReference>
<dbReference type="SUPFAM" id="SSF55681">
    <property type="entry name" value="Class II aaRS and biotin synthetases"/>
    <property type="match status" value="1"/>
</dbReference>
<dbReference type="SUPFAM" id="SSF81271">
    <property type="entry name" value="TGS-like"/>
    <property type="match status" value="1"/>
</dbReference>
<dbReference type="SUPFAM" id="SSF55186">
    <property type="entry name" value="ThrRS/AlaRS common domain"/>
    <property type="match status" value="1"/>
</dbReference>
<dbReference type="PROSITE" id="PS50862">
    <property type="entry name" value="AA_TRNA_LIGASE_II"/>
    <property type="match status" value="1"/>
</dbReference>
<dbReference type="PROSITE" id="PS51880">
    <property type="entry name" value="TGS"/>
    <property type="match status" value="1"/>
</dbReference>
<proteinExistence type="inferred from homology"/>